<protein>
    <recommendedName>
        <fullName evidence="1">Glutamyl-tRNA reductase</fullName>
        <shortName evidence="1">GluTR</shortName>
        <ecNumber evidence="1">1.2.1.70</ecNumber>
    </recommendedName>
</protein>
<sequence length="425" mass="46107">MAFLALGINHKTASVDVRERVAFTPEQLVEALQQLCQLTQSREAAILSTCNRSELYIEHEHLGADSILAWLANYHHLSLEELRASAYVHEDDAAVRHMMRVASGLDSLVLGEPQILGQMKSAYAVAREAGTVGPLLGRLFQATFSAAKQVRTDTAIGENPVSVAFAAVSLAKQIFSDLQRSQALLIGAGETITLVARHLHDLGVKRIVVANRTLERASMLAAEFGAHAVLLSDIPAELVNSDIVISSTASQLPILGKGAVESALKLRKHKPIFMVDIAVPRDIEPEVGELDDVYLYSVDDLHEVVAENLKSRQGAALAAEQLVSVGAEDFMSRLRELAAVDVLRAYRQQSERLRDEELSKAQRMLANGSNAEDVLIQLARGLTNKLLHAPSVQLKKLSAEGRVDALAMAQELFALGEGSTDKPPQ</sequence>
<evidence type="ECO:0000255" key="1">
    <source>
        <dbReference type="HAMAP-Rule" id="MF_00087"/>
    </source>
</evidence>
<comment type="function">
    <text evidence="1">Catalyzes the NADPH-dependent reduction of glutamyl-tRNA(Glu) to glutamate 1-semialdehyde (GSA).</text>
</comment>
<comment type="catalytic activity">
    <reaction evidence="1">
        <text>(S)-4-amino-5-oxopentanoate + tRNA(Glu) + NADP(+) = L-glutamyl-tRNA(Glu) + NADPH + H(+)</text>
        <dbReference type="Rhea" id="RHEA:12344"/>
        <dbReference type="Rhea" id="RHEA-COMP:9663"/>
        <dbReference type="Rhea" id="RHEA-COMP:9680"/>
        <dbReference type="ChEBI" id="CHEBI:15378"/>
        <dbReference type="ChEBI" id="CHEBI:57501"/>
        <dbReference type="ChEBI" id="CHEBI:57783"/>
        <dbReference type="ChEBI" id="CHEBI:58349"/>
        <dbReference type="ChEBI" id="CHEBI:78442"/>
        <dbReference type="ChEBI" id="CHEBI:78520"/>
        <dbReference type="EC" id="1.2.1.70"/>
    </reaction>
</comment>
<comment type="pathway">
    <text evidence="1">Porphyrin-containing compound metabolism; protoporphyrin-IX biosynthesis; 5-aminolevulinate from L-glutamyl-tRNA(Glu): step 1/2.</text>
</comment>
<comment type="subunit">
    <text evidence="1">Homodimer.</text>
</comment>
<comment type="domain">
    <text evidence="1">Possesses an unusual extended V-shaped dimeric structure with each monomer consisting of three distinct domains arranged along a curved 'spinal' alpha-helix. The N-terminal catalytic domain specifically recognizes the glutamate moiety of the substrate. The second domain is the NADPH-binding domain, and the third C-terminal domain is responsible for dimerization.</text>
</comment>
<comment type="miscellaneous">
    <text evidence="1">During catalysis, the active site Cys acts as a nucleophile attacking the alpha-carbonyl group of tRNA-bound glutamate with the formation of a thioester intermediate between enzyme and glutamate, and the concomitant release of tRNA(Glu). The thioester intermediate is finally reduced by direct hydride transfer from NADPH, to form the product GSA.</text>
</comment>
<comment type="similarity">
    <text evidence="1">Belongs to the glutamyl-tRNA reductase family.</text>
</comment>
<organism>
    <name type="scientific">Pseudomonas syringae pv. syringae (strain B728a)</name>
    <dbReference type="NCBI Taxonomy" id="205918"/>
    <lineage>
        <taxon>Bacteria</taxon>
        <taxon>Pseudomonadati</taxon>
        <taxon>Pseudomonadota</taxon>
        <taxon>Gammaproteobacteria</taxon>
        <taxon>Pseudomonadales</taxon>
        <taxon>Pseudomonadaceae</taxon>
        <taxon>Pseudomonas</taxon>
        <taxon>Pseudomonas syringae</taxon>
    </lineage>
</organism>
<proteinExistence type="inferred from homology"/>
<name>HEM1_PSEU2</name>
<keyword id="KW-0521">NADP</keyword>
<keyword id="KW-0560">Oxidoreductase</keyword>
<keyword id="KW-0627">Porphyrin biosynthesis</keyword>
<feature type="chain" id="PRO_1000004674" description="Glutamyl-tRNA reductase">
    <location>
        <begin position="1"/>
        <end position="425"/>
    </location>
</feature>
<feature type="active site" description="Nucleophile" evidence="1">
    <location>
        <position position="50"/>
    </location>
</feature>
<feature type="binding site" evidence="1">
    <location>
        <begin position="49"/>
        <end position="52"/>
    </location>
    <ligand>
        <name>substrate</name>
    </ligand>
</feature>
<feature type="binding site" evidence="1">
    <location>
        <position position="107"/>
    </location>
    <ligand>
        <name>substrate</name>
    </ligand>
</feature>
<feature type="binding site" evidence="1">
    <location>
        <begin position="112"/>
        <end position="114"/>
    </location>
    <ligand>
        <name>substrate</name>
    </ligand>
</feature>
<feature type="binding site" evidence="1">
    <location>
        <position position="118"/>
    </location>
    <ligand>
        <name>substrate</name>
    </ligand>
</feature>
<feature type="binding site" evidence="1">
    <location>
        <begin position="187"/>
        <end position="192"/>
    </location>
    <ligand>
        <name>NADP(+)</name>
        <dbReference type="ChEBI" id="CHEBI:58349"/>
    </ligand>
</feature>
<feature type="site" description="Important for activity" evidence="1">
    <location>
        <position position="97"/>
    </location>
</feature>
<accession>Q4ZXW8</accession>
<dbReference type="EC" id="1.2.1.70" evidence="1"/>
<dbReference type="EMBL" id="CP000075">
    <property type="protein sequence ID" value="AAY36004.1"/>
    <property type="molecule type" value="Genomic_DNA"/>
</dbReference>
<dbReference type="RefSeq" id="WP_011266733.1">
    <property type="nucleotide sequence ID" value="NC_007005.1"/>
</dbReference>
<dbReference type="RefSeq" id="YP_234042.1">
    <property type="nucleotide sequence ID" value="NC_007005.1"/>
</dbReference>
<dbReference type="SMR" id="Q4ZXW8"/>
<dbReference type="STRING" id="205918.Psyr_0948"/>
<dbReference type="KEGG" id="psb:Psyr_0948"/>
<dbReference type="PATRIC" id="fig|205918.7.peg.977"/>
<dbReference type="eggNOG" id="COG0373">
    <property type="taxonomic scope" value="Bacteria"/>
</dbReference>
<dbReference type="HOGENOM" id="CLU_035113_2_2_6"/>
<dbReference type="OrthoDB" id="110209at2"/>
<dbReference type="UniPathway" id="UPA00251">
    <property type="reaction ID" value="UER00316"/>
</dbReference>
<dbReference type="Proteomes" id="UP000000426">
    <property type="component" value="Chromosome"/>
</dbReference>
<dbReference type="GO" id="GO:0008883">
    <property type="term" value="F:glutamyl-tRNA reductase activity"/>
    <property type="evidence" value="ECO:0007669"/>
    <property type="project" value="UniProtKB-UniRule"/>
</dbReference>
<dbReference type="GO" id="GO:0050661">
    <property type="term" value="F:NADP binding"/>
    <property type="evidence" value="ECO:0007669"/>
    <property type="project" value="InterPro"/>
</dbReference>
<dbReference type="GO" id="GO:0019353">
    <property type="term" value="P:protoporphyrinogen IX biosynthetic process from glutamate"/>
    <property type="evidence" value="ECO:0007669"/>
    <property type="project" value="TreeGrafter"/>
</dbReference>
<dbReference type="CDD" id="cd05213">
    <property type="entry name" value="NAD_bind_Glutamyl_tRNA_reduct"/>
    <property type="match status" value="1"/>
</dbReference>
<dbReference type="FunFam" id="3.30.460.30:FF:000001">
    <property type="entry name" value="Glutamyl-tRNA reductase"/>
    <property type="match status" value="1"/>
</dbReference>
<dbReference type="FunFam" id="3.40.50.720:FF:000031">
    <property type="entry name" value="Glutamyl-tRNA reductase"/>
    <property type="match status" value="1"/>
</dbReference>
<dbReference type="Gene3D" id="3.30.460.30">
    <property type="entry name" value="Glutamyl-tRNA reductase, N-terminal domain"/>
    <property type="match status" value="1"/>
</dbReference>
<dbReference type="Gene3D" id="3.40.50.720">
    <property type="entry name" value="NAD(P)-binding Rossmann-like Domain"/>
    <property type="match status" value="1"/>
</dbReference>
<dbReference type="HAMAP" id="MF_00087">
    <property type="entry name" value="Glu_tRNA_reductase"/>
    <property type="match status" value="1"/>
</dbReference>
<dbReference type="InterPro" id="IPR000343">
    <property type="entry name" value="4pyrrol_synth_GluRdtase"/>
</dbReference>
<dbReference type="InterPro" id="IPR015896">
    <property type="entry name" value="4pyrrol_synth_GluRdtase_dimer"/>
</dbReference>
<dbReference type="InterPro" id="IPR015895">
    <property type="entry name" value="4pyrrol_synth_GluRdtase_N"/>
</dbReference>
<dbReference type="InterPro" id="IPR018214">
    <property type="entry name" value="GluRdtase_CS"/>
</dbReference>
<dbReference type="InterPro" id="IPR036453">
    <property type="entry name" value="GluRdtase_dimer_dom_sf"/>
</dbReference>
<dbReference type="InterPro" id="IPR036343">
    <property type="entry name" value="GluRdtase_N_sf"/>
</dbReference>
<dbReference type="InterPro" id="IPR036291">
    <property type="entry name" value="NAD(P)-bd_dom_sf"/>
</dbReference>
<dbReference type="InterPro" id="IPR006151">
    <property type="entry name" value="Shikm_DH/Glu-tRNA_Rdtase"/>
</dbReference>
<dbReference type="NCBIfam" id="TIGR01035">
    <property type="entry name" value="hemA"/>
    <property type="match status" value="1"/>
</dbReference>
<dbReference type="PANTHER" id="PTHR43013">
    <property type="entry name" value="GLUTAMYL-TRNA REDUCTASE"/>
    <property type="match status" value="1"/>
</dbReference>
<dbReference type="PANTHER" id="PTHR43013:SF1">
    <property type="entry name" value="GLUTAMYL-TRNA REDUCTASE"/>
    <property type="match status" value="1"/>
</dbReference>
<dbReference type="Pfam" id="PF00745">
    <property type="entry name" value="GlutR_dimer"/>
    <property type="match status" value="1"/>
</dbReference>
<dbReference type="Pfam" id="PF05201">
    <property type="entry name" value="GlutR_N"/>
    <property type="match status" value="1"/>
</dbReference>
<dbReference type="Pfam" id="PF01488">
    <property type="entry name" value="Shikimate_DH"/>
    <property type="match status" value="1"/>
</dbReference>
<dbReference type="PIRSF" id="PIRSF000445">
    <property type="entry name" value="4pyrrol_synth_GluRdtase"/>
    <property type="match status" value="1"/>
</dbReference>
<dbReference type="SUPFAM" id="SSF69742">
    <property type="entry name" value="Glutamyl tRNA-reductase catalytic, N-terminal domain"/>
    <property type="match status" value="1"/>
</dbReference>
<dbReference type="SUPFAM" id="SSF69075">
    <property type="entry name" value="Glutamyl tRNA-reductase dimerization domain"/>
    <property type="match status" value="1"/>
</dbReference>
<dbReference type="SUPFAM" id="SSF51735">
    <property type="entry name" value="NAD(P)-binding Rossmann-fold domains"/>
    <property type="match status" value="1"/>
</dbReference>
<dbReference type="PROSITE" id="PS00747">
    <property type="entry name" value="GLUTR"/>
    <property type="match status" value="1"/>
</dbReference>
<gene>
    <name evidence="1" type="primary">hemA</name>
    <name type="ordered locus">Psyr_0948</name>
</gene>
<reference key="1">
    <citation type="journal article" date="2005" name="Proc. Natl. Acad. Sci. U.S.A.">
        <title>Comparison of the complete genome sequences of Pseudomonas syringae pv. syringae B728a and pv. tomato DC3000.</title>
        <authorList>
            <person name="Feil H."/>
            <person name="Feil W.S."/>
            <person name="Chain P."/>
            <person name="Larimer F."/>
            <person name="Dibartolo G."/>
            <person name="Copeland A."/>
            <person name="Lykidis A."/>
            <person name="Trong S."/>
            <person name="Nolan M."/>
            <person name="Goltsman E."/>
            <person name="Thiel J."/>
            <person name="Malfatti S."/>
            <person name="Loper J.E."/>
            <person name="Lapidus A."/>
            <person name="Detter J.C."/>
            <person name="Land M."/>
            <person name="Richardson P.M."/>
            <person name="Kyrpides N.C."/>
            <person name="Ivanova N."/>
            <person name="Lindow S.E."/>
        </authorList>
    </citation>
    <scope>NUCLEOTIDE SEQUENCE [LARGE SCALE GENOMIC DNA]</scope>
    <source>
        <strain>B728a</strain>
    </source>
</reference>